<dbReference type="EC" id="6.1.1.21"/>
<dbReference type="EMBL" id="Z17214">
    <property type="protein sequence ID" value="CAA78919.1"/>
    <property type="status" value="ALT_INIT"/>
    <property type="molecule type" value="Genomic_DNA"/>
</dbReference>
<dbReference type="PIR" id="S30233">
    <property type="entry name" value="S30233"/>
</dbReference>
<dbReference type="SMR" id="P30053"/>
<dbReference type="BRENDA" id="6.1.1.21">
    <property type="organism ID" value="5928"/>
</dbReference>
<dbReference type="GO" id="GO:0005737">
    <property type="term" value="C:cytoplasm"/>
    <property type="evidence" value="ECO:0007669"/>
    <property type="project" value="UniProtKB-SubCell"/>
</dbReference>
<dbReference type="GO" id="GO:0005524">
    <property type="term" value="F:ATP binding"/>
    <property type="evidence" value="ECO:0007669"/>
    <property type="project" value="UniProtKB-UniRule"/>
</dbReference>
<dbReference type="GO" id="GO:0140096">
    <property type="term" value="F:catalytic activity, acting on a protein"/>
    <property type="evidence" value="ECO:0007669"/>
    <property type="project" value="UniProtKB-ARBA"/>
</dbReference>
<dbReference type="GO" id="GO:0004821">
    <property type="term" value="F:histidine-tRNA ligase activity"/>
    <property type="evidence" value="ECO:0007669"/>
    <property type="project" value="UniProtKB-UniRule"/>
</dbReference>
<dbReference type="GO" id="GO:0016740">
    <property type="term" value="F:transferase activity"/>
    <property type="evidence" value="ECO:0007669"/>
    <property type="project" value="UniProtKB-ARBA"/>
</dbReference>
<dbReference type="GO" id="GO:0006427">
    <property type="term" value="P:histidyl-tRNA aminoacylation"/>
    <property type="evidence" value="ECO:0007669"/>
    <property type="project" value="UniProtKB-UniRule"/>
</dbReference>
<dbReference type="CDD" id="cd00773">
    <property type="entry name" value="HisRS-like_core"/>
    <property type="match status" value="1"/>
</dbReference>
<dbReference type="CDD" id="cd00859">
    <property type="entry name" value="HisRS_anticodon"/>
    <property type="match status" value="1"/>
</dbReference>
<dbReference type="FunFam" id="3.30.930.10:FF:000005">
    <property type="entry name" value="Histidine--tRNA ligase"/>
    <property type="match status" value="1"/>
</dbReference>
<dbReference type="Gene3D" id="3.40.50.800">
    <property type="entry name" value="Anticodon-binding domain"/>
    <property type="match status" value="1"/>
</dbReference>
<dbReference type="Gene3D" id="3.30.930.10">
    <property type="entry name" value="Bira Bifunctional Protein, Domain 2"/>
    <property type="match status" value="1"/>
</dbReference>
<dbReference type="HAMAP" id="MF_00127">
    <property type="entry name" value="His_tRNA_synth"/>
    <property type="match status" value="1"/>
</dbReference>
<dbReference type="InterPro" id="IPR006195">
    <property type="entry name" value="aa-tRNA-synth_II"/>
</dbReference>
<dbReference type="InterPro" id="IPR045864">
    <property type="entry name" value="aa-tRNA-synth_II/BPL/LPL"/>
</dbReference>
<dbReference type="InterPro" id="IPR004154">
    <property type="entry name" value="Anticodon-bd"/>
</dbReference>
<dbReference type="InterPro" id="IPR036621">
    <property type="entry name" value="Anticodon-bd_dom_sf"/>
</dbReference>
<dbReference type="InterPro" id="IPR015807">
    <property type="entry name" value="His-tRNA-ligase"/>
</dbReference>
<dbReference type="InterPro" id="IPR041715">
    <property type="entry name" value="HisRS-like_core"/>
</dbReference>
<dbReference type="InterPro" id="IPR004516">
    <property type="entry name" value="HisRS/HisZ"/>
</dbReference>
<dbReference type="InterPro" id="IPR033656">
    <property type="entry name" value="HisRS_anticodon"/>
</dbReference>
<dbReference type="NCBIfam" id="TIGR00442">
    <property type="entry name" value="hisS"/>
    <property type="match status" value="1"/>
</dbReference>
<dbReference type="PANTHER" id="PTHR43707:SF1">
    <property type="entry name" value="HISTIDINE--TRNA LIGASE, MITOCHONDRIAL-RELATED"/>
    <property type="match status" value="1"/>
</dbReference>
<dbReference type="PANTHER" id="PTHR43707">
    <property type="entry name" value="HISTIDYL-TRNA SYNTHETASE"/>
    <property type="match status" value="1"/>
</dbReference>
<dbReference type="Pfam" id="PF03129">
    <property type="entry name" value="HGTP_anticodon"/>
    <property type="match status" value="1"/>
</dbReference>
<dbReference type="Pfam" id="PF13393">
    <property type="entry name" value="tRNA-synt_His"/>
    <property type="match status" value="1"/>
</dbReference>
<dbReference type="PIRSF" id="PIRSF001549">
    <property type="entry name" value="His-tRNA_synth"/>
    <property type="match status" value="1"/>
</dbReference>
<dbReference type="SUPFAM" id="SSF52954">
    <property type="entry name" value="Class II aaRS ABD-related"/>
    <property type="match status" value="1"/>
</dbReference>
<dbReference type="SUPFAM" id="SSF55681">
    <property type="entry name" value="Class II aaRS and biotin synthetases"/>
    <property type="match status" value="1"/>
</dbReference>
<dbReference type="PROSITE" id="PS50862">
    <property type="entry name" value="AA_TRNA_LIGASE_II"/>
    <property type="match status" value="1"/>
</dbReference>
<evidence type="ECO:0000250" key="1"/>
<evidence type="ECO:0000305" key="2"/>
<keyword id="KW-0030">Aminoacyl-tRNA synthetase</keyword>
<keyword id="KW-0067">ATP-binding</keyword>
<keyword id="KW-0963">Cytoplasm</keyword>
<keyword id="KW-0903">Direct protein sequencing</keyword>
<keyword id="KW-0436">Ligase</keyword>
<keyword id="KW-0547">Nucleotide-binding</keyword>
<keyword id="KW-0648">Protein biosynthesis</keyword>
<sequence>MKLQKPKGTQDILSVAAAKWQYVEGVARETFKQYHYGEIRTPMFEHYEVISRSVGDTTDIVTKEMYDFYDKGDRHITLRPEGTAPVVRSYVENKLFAPEVQKPVKLYYIGSMFRYERPQAGRLREFHQIGVECFGSANPATDVETIAMAYHLFERLGIKGVTLHLNSLGNAASRAAYRQALIDYLSPMRDTLSKDSQRRLDENPLRVLDSKEKEDKIAVANAPSILDYQDEESQAHFDAVRSMLEALAIPYVIDTNMVRGLDYYNHTIFEFITEVDQSELTICAGGRYDGLVEYFGGPATPGFGFGLGLERLLLILDKQGVELPVEEGLDVYIAVLGADANVAALALTQAIRRQGFTVERDYLGRKIKAQFKSADTFKAKVVITLGESEIKAGQAVLKHNQTRQEMTVSFDQIQTDFASIFAECVQ</sequence>
<comment type="catalytic activity">
    <reaction>
        <text>tRNA(His) + L-histidine + ATP = L-histidyl-tRNA(His) + AMP + diphosphate + H(+)</text>
        <dbReference type="Rhea" id="RHEA:17313"/>
        <dbReference type="Rhea" id="RHEA-COMP:9665"/>
        <dbReference type="Rhea" id="RHEA-COMP:9689"/>
        <dbReference type="ChEBI" id="CHEBI:15378"/>
        <dbReference type="ChEBI" id="CHEBI:30616"/>
        <dbReference type="ChEBI" id="CHEBI:33019"/>
        <dbReference type="ChEBI" id="CHEBI:57595"/>
        <dbReference type="ChEBI" id="CHEBI:78442"/>
        <dbReference type="ChEBI" id="CHEBI:78527"/>
        <dbReference type="ChEBI" id="CHEBI:456215"/>
        <dbReference type="EC" id="6.1.1.21"/>
    </reaction>
</comment>
<comment type="subunit">
    <text evidence="1">Homodimer.</text>
</comment>
<comment type="subcellular location">
    <subcellularLocation>
        <location>Cytoplasm</location>
    </subcellularLocation>
</comment>
<comment type="similarity">
    <text evidence="2">Belongs to the class-II aminoacyl-tRNA synthetase family.</text>
</comment>
<comment type="sequence caution" evidence="2">
    <conflict type="erroneous initiation">
        <sequence resource="EMBL-CDS" id="CAA78919"/>
    </conflict>
</comment>
<proteinExistence type="evidence at protein level"/>
<name>SYH_STREQ</name>
<gene>
    <name type="primary">hisS</name>
</gene>
<protein>
    <recommendedName>
        <fullName>Histidine--tRNA ligase</fullName>
        <ecNumber>6.1.1.21</ecNumber>
    </recommendedName>
    <alternativeName>
        <fullName>Histidyl-tRNA synthetase</fullName>
        <shortName>HisRS</shortName>
    </alternativeName>
</protein>
<organism>
    <name type="scientific">Streptococcus dysgalactiae subsp. equisimilis</name>
    <name type="common">Streptococcus equisimilis</name>
    <dbReference type="NCBI Taxonomy" id="119602"/>
    <lineage>
        <taxon>Bacteria</taxon>
        <taxon>Bacillati</taxon>
        <taxon>Bacillota</taxon>
        <taxon>Bacilli</taxon>
        <taxon>Lactobacillales</taxon>
        <taxon>Streptococcaceae</taxon>
        <taxon>Streptococcus</taxon>
    </lineage>
</organism>
<feature type="initiator methionine" description="Removed">
    <location>
        <position position="1"/>
    </location>
</feature>
<feature type="chain" id="PRO_0000136262" description="Histidine--tRNA ligase">
    <location>
        <begin position="2"/>
        <end position="426"/>
    </location>
</feature>
<feature type="sequence conflict" description="In Ref. 1; AA sequence." evidence="2" ref="1">
    <original>Q</original>
    <variation>L</variation>
    <location>
        <position position="229"/>
    </location>
</feature>
<accession>P30053</accession>
<reference key="1">
    <citation type="journal article" date="1993" name="Nucleic Acids Res.">
        <title>Molecular cloning, sequence, structural analysis and expression of the histidyl-tRNA synthetase gene from Streptococcus equisimilis.</title>
        <authorList>
            <person name="Menguito C.A."/>
            <person name="Keherly M.J."/>
            <person name="Tang C.-Y."/>
            <person name="Papaconstantinou J."/>
            <person name="Weigel P.H."/>
        </authorList>
    </citation>
    <scope>NUCLEOTIDE SEQUENCE [GENOMIC DNA]</scope>
    <scope>PARTIAL PROTEIN SEQUENCE</scope>
    <source>
        <strain>D181</strain>
    </source>
</reference>